<accession>Q9BL02</accession>
<reference key="1">
    <citation type="journal article" date="1998" name="Science">
        <title>Genome sequence of the nematode C. elegans: a platform for investigating biology.</title>
        <authorList>
            <consortium name="The C. elegans sequencing consortium"/>
        </authorList>
    </citation>
    <scope>NUCLEOTIDE SEQUENCE [LARGE SCALE GENOMIC DNA]</scope>
    <scope>ALTERNATIVE SPLICING</scope>
    <source>
        <strain>Bristol N2</strain>
    </source>
</reference>
<comment type="function">
    <text evidence="1">Probable DNA-binding regulatory protein involved in cell-fate specification.</text>
</comment>
<comment type="subcellular location">
    <subcellularLocation>
        <location evidence="3 4">Nucleus</location>
    </subcellularLocation>
</comment>
<comment type="alternative products">
    <event type="alternative splicing"/>
    <isoform>
        <id>Q9BL02-1</id>
        <name>a</name>
        <sequence type="displayed"/>
    </isoform>
    <isoform>
        <id>Q8IA98-1</id>
        <name>b</name>
        <sequence type="external"/>
    </isoform>
    <isoform>
        <id>Q8IA98-2</id>
        <name>c</name>
        <sequence type="external"/>
    </isoform>
</comment>
<comment type="miscellaneous">
    <text>Asn-1149 may participate in regulating DNA-binding activity by promoting homo- and heterodimerization.</text>
</comment>
<comment type="similarity">
    <text evidence="6">Belongs to the CUT homeobox family.</text>
</comment>
<evidence type="ECO:0000250" key="1"/>
<evidence type="ECO:0000255" key="2"/>
<evidence type="ECO:0000255" key="3">
    <source>
        <dbReference type="PROSITE-ProRule" id="PRU00108"/>
    </source>
</evidence>
<evidence type="ECO:0000255" key="4">
    <source>
        <dbReference type="PROSITE-ProRule" id="PRU00374"/>
    </source>
</evidence>
<evidence type="ECO:0000256" key="5">
    <source>
        <dbReference type="SAM" id="MobiDB-lite"/>
    </source>
</evidence>
<evidence type="ECO:0000305" key="6"/>
<evidence type="ECO:0000312" key="7">
    <source>
        <dbReference type="WormBase" id="Y54F10AM.4"/>
    </source>
</evidence>
<gene>
    <name evidence="7" type="primary">ceh-44</name>
    <name evidence="7" type="synonym">cone-1</name>
    <name evidence="7" type="ORF">Y54F10AM.4</name>
</gene>
<protein>
    <recommendedName>
        <fullName>Homeobox protein cut-like ceh-44</fullName>
        <shortName>Homeobox protein 44</shortName>
    </recommendedName>
</protein>
<organism>
    <name type="scientific">Caenorhabditis elegans</name>
    <dbReference type="NCBI Taxonomy" id="6239"/>
    <lineage>
        <taxon>Eukaryota</taxon>
        <taxon>Metazoa</taxon>
        <taxon>Ecdysozoa</taxon>
        <taxon>Nematoda</taxon>
        <taxon>Chromadorea</taxon>
        <taxon>Rhabditida</taxon>
        <taxon>Rhabditina</taxon>
        <taxon>Rhabditomorpha</taxon>
        <taxon>Rhabditoidea</taxon>
        <taxon>Rhabditidae</taxon>
        <taxon>Peloderinae</taxon>
        <taxon>Caenorhabditis</taxon>
    </lineage>
</organism>
<sequence length="1273" mass="143526">MEIVSRAWESVDWDRIQTRVEAEVTALGQRQDDSEIRKTRLVEESNAYRGRTNKDSRKVAIPLIKAFQSEFDGLLARSTAAENALIDICKSIVSLPDPKSLLKGAEAWKNDAEKTQKAVEEREELKRQLIKVNNELEDLRGKDVKVRKLKDKLAKLESEQDIFIENAVNEVEKKAEQELNDRLTELIAEKEKMKEQNEILEKNMDSLESKNKDIQRKLEIAKQTVEQKDGLENEQLSIAMKDLADAKHKIVFLEERVSQLENEAEKVNESKKAGNIEDIAALGSVLVQKDDVIQQLTNDIKRHEASHVEELAKWKLAVSAVEKKNKTLIGELNELKNQLESRNDYEAIKNELRLLREIEFGDSAEANAESIERLGETVETLDRLLAEKNRRLQNENASLRVANDGFKGDEVMKAIVSGSHSRVVETVGKRVGAEEANSYRQKNTDSELIEKIQEAKRNKAVCELKFEDPTINVLTYLKNQKAKEAGKRDAPTPILAAPVTPKHVTKLGTHTITTTALPPRTQTAETTQSILQRLSNGSNKHLLNEDLKLSTVLNLKRFSGNPAKPLEAKTSEEQKAELETIEKMQKRIQVNVQALNGHPLNTTEIASHCKRLMIAYNIGQRLFAKHVMNQVVKSQGSLSELLSKPRHWNKLTDKGREAFRRIYGWISDDEAINLLCSLSPRRVWPADQNIEHPKAETLLDTSDPMEFKEEPVIRYDVTPKVEPVIEKIKSPVESPCSSQAGASSLRASRWRHDDISKEKILSILQTELKKIEEETTESKVVVPVKPTATGGNRRFSSNSTYESSSLTGKSRPSTVELILKQRISTGLQPLTQAQYDAYTVLDTDFLVKQIKEFLTMNSISQRQFGEYILGLSQGSVSDLLARPKTWAQLTQKGREPFIRMQLFMDDVEASEENDEKQPKITICDEDSDLAKTLATLLNAVHREPSEPKTSVKLEPLSEIDVIMQVPSASKPSSVVKSIDESSGEEILDTFEIVYQVKGILEENGISPRVFGDEYLHCTSSMCADLMIRTKSFENSKASEKLMYTRMKTFLSDPIAIPLLVEKEESKETVKAKIESVPAPREAPRPVKRKHSSDTDDYDLNTKKPIQRTVITDYQKDTLRFVFVNEQHPSNELCEQISLKLDMSLRTVQNWFHNHRTRSKAREKEGKVYSDALPNGTAVKSLTWKDDLQKMLDEAPAITSQWAPDYQNRAGSVKSSTSADSPTNNNYSSPIFSFDKASTTSTVKKPSSTGKLDNLVARMIRLAEGREAAAAKAS</sequence>
<keyword id="KW-0025">Alternative splicing</keyword>
<keyword id="KW-0175">Coiled coil</keyword>
<keyword id="KW-0238">DNA-binding</keyword>
<keyword id="KW-0371">Homeobox</keyword>
<keyword id="KW-0539">Nucleus</keyword>
<keyword id="KW-1185">Reference proteome</keyword>
<keyword id="KW-0677">Repeat</keyword>
<keyword id="KW-0804">Transcription</keyword>
<keyword id="KW-0805">Transcription regulation</keyword>
<feature type="chain" id="PRO_0000202391" description="Homeobox protein cut-like ceh-44">
    <location>
        <begin position="1"/>
        <end position="1273"/>
    </location>
</feature>
<feature type="DNA-binding region" description="CUT 1" evidence="4">
    <location>
        <begin position="591"/>
        <end position="681"/>
    </location>
</feature>
<feature type="DNA-binding region" description="CUT 2" evidence="4">
    <location>
        <begin position="832"/>
        <end position="919"/>
    </location>
</feature>
<feature type="DNA-binding region" description="CUT 3" evidence="4">
    <location>
        <begin position="978"/>
        <end position="1065"/>
    </location>
</feature>
<feature type="DNA-binding region" description="Homeobox" evidence="3">
    <location>
        <begin position="1103"/>
        <end position="1162"/>
    </location>
</feature>
<feature type="region of interest" description="Disordered" evidence="5">
    <location>
        <begin position="1069"/>
        <end position="1100"/>
    </location>
</feature>
<feature type="coiled-coil region" evidence="2">
    <location>
        <begin position="101"/>
        <end position="407"/>
    </location>
</feature>
<feature type="coiled-coil region" evidence="2">
    <location>
        <begin position="440"/>
        <end position="468"/>
    </location>
</feature>
<name>CUT_CAEEL</name>
<proteinExistence type="inferred from homology"/>
<dbReference type="EMBL" id="FO081806">
    <property type="protein sequence ID" value="CCD73822.1"/>
    <property type="molecule type" value="Genomic_DNA"/>
</dbReference>
<dbReference type="RefSeq" id="NP_497576.1">
    <molecule id="Q9BL02-1"/>
    <property type="nucleotide sequence ID" value="NM_065175.9"/>
</dbReference>
<dbReference type="SMR" id="Q9BL02"/>
<dbReference type="BioGRID" id="40620">
    <property type="interactions" value="4"/>
</dbReference>
<dbReference type="FunCoup" id="Q9BL02">
    <property type="interactions" value="431"/>
</dbReference>
<dbReference type="STRING" id="6239.Y54F10AM.4.1"/>
<dbReference type="PaxDb" id="6239-Y54F10AM.4"/>
<dbReference type="PeptideAtlas" id="Q9BL02"/>
<dbReference type="EnsemblMetazoa" id="Y54F10AM.4a.1">
    <molecule id="Q9BL02-1"/>
    <property type="protein sequence ID" value="Y54F10AM.4a.1"/>
    <property type="gene ID" value="WBGene00000464"/>
</dbReference>
<dbReference type="GeneID" id="80510351"/>
<dbReference type="KEGG" id="cel:CELE_Y54F10AM.4"/>
<dbReference type="UCSC" id="Y54F10AM.4c">
    <molecule id="Q9BL02-1"/>
    <property type="organism name" value="c. elegans"/>
</dbReference>
<dbReference type="AGR" id="WB:WBGene00000464"/>
<dbReference type="CTD" id="80510351"/>
<dbReference type="WormBase" id="Y54F10AM.4">
    <property type="protein sequence ID" value="CE27288"/>
    <property type="gene ID" value="WBGene00000464"/>
    <property type="gene designation" value="ceh-44"/>
</dbReference>
<dbReference type="eggNOG" id="KOG0963">
    <property type="taxonomic scope" value="Eukaryota"/>
</dbReference>
<dbReference type="eggNOG" id="KOG2252">
    <property type="taxonomic scope" value="Eukaryota"/>
</dbReference>
<dbReference type="GeneTree" id="ENSGT00940000172657"/>
<dbReference type="HOGENOM" id="CLU_003980_0_0_1"/>
<dbReference type="InParanoid" id="Q9BL02"/>
<dbReference type="OrthoDB" id="10257567at2759"/>
<dbReference type="PhylomeDB" id="Q9BL02"/>
<dbReference type="Proteomes" id="UP000001940">
    <property type="component" value="Chromosome III"/>
</dbReference>
<dbReference type="Bgee" id="WBGene00000464">
    <property type="expression patterns" value="Expressed in embryo and 4 other cell types or tissues"/>
</dbReference>
<dbReference type="ExpressionAtlas" id="Q9BL02">
    <property type="expression patterns" value="baseline and differential"/>
</dbReference>
<dbReference type="GO" id="GO:0005634">
    <property type="term" value="C:nucleus"/>
    <property type="evidence" value="ECO:0000318"/>
    <property type="project" value="GO_Central"/>
</dbReference>
<dbReference type="GO" id="GO:0000981">
    <property type="term" value="F:DNA-binding transcription factor activity, RNA polymerase II-specific"/>
    <property type="evidence" value="ECO:0000318"/>
    <property type="project" value="GO_Central"/>
</dbReference>
<dbReference type="GO" id="GO:0000977">
    <property type="term" value="F:RNA polymerase II transcription regulatory region sequence-specific DNA binding"/>
    <property type="evidence" value="ECO:0000318"/>
    <property type="project" value="GO_Central"/>
</dbReference>
<dbReference type="GO" id="GO:0030154">
    <property type="term" value="P:cell differentiation"/>
    <property type="evidence" value="ECO:0007669"/>
    <property type="project" value="UniProtKB-ARBA"/>
</dbReference>
<dbReference type="GO" id="GO:0006357">
    <property type="term" value="P:regulation of transcription by RNA polymerase II"/>
    <property type="evidence" value="ECO:0000318"/>
    <property type="project" value="GO_Central"/>
</dbReference>
<dbReference type="CDD" id="cd00086">
    <property type="entry name" value="homeodomain"/>
    <property type="match status" value="1"/>
</dbReference>
<dbReference type="FunFam" id="1.10.260.40:FF:000027">
    <property type="entry name" value="Homeobox protein cut-like"/>
    <property type="match status" value="1"/>
</dbReference>
<dbReference type="Gene3D" id="1.10.10.60">
    <property type="entry name" value="Homeodomain-like"/>
    <property type="match status" value="1"/>
</dbReference>
<dbReference type="Gene3D" id="1.10.260.40">
    <property type="entry name" value="lambda repressor-like DNA-binding domains"/>
    <property type="match status" value="3"/>
</dbReference>
<dbReference type="InterPro" id="IPR003350">
    <property type="entry name" value="CUT_dom"/>
</dbReference>
<dbReference type="InterPro" id="IPR001356">
    <property type="entry name" value="HD"/>
</dbReference>
<dbReference type="InterPro" id="IPR017970">
    <property type="entry name" value="Homeobox_CS"/>
</dbReference>
<dbReference type="InterPro" id="IPR009057">
    <property type="entry name" value="Homeodomain-like_sf"/>
</dbReference>
<dbReference type="InterPro" id="IPR010982">
    <property type="entry name" value="Lambda_DNA-bd_dom_sf"/>
</dbReference>
<dbReference type="PANTHER" id="PTHR14043">
    <property type="entry name" value="CCAAT DISPLACEMENT PROTEIN-RELATED"/>
    <property type="match status" value="1"/>
</dbReference>
<dbReference type="PANTHER" id="PTHR14043:SF2">
    <property type="entry name" value="HOMEOBOX PROTEIN CUT"/>
    <property type="match status" value="1"/>
</dbReference>
<dbReference type="Pfam" id="PF02376">
    <property type="entry name" value="CUT"/>
    <property type="match status" value="3"/>
</dbReference>
<dbReference type="Pfam" id="PF25398">
    <property type="entry name" value="CUX1_N"/>
    <property type="match status" value="1"/>
</dbReference>
<dbReference type="Pfam" id="PF00046">
    <property type="entry name" value="Homeodomain"/>
    <property type="match status" value="1"/>
</dbReference>
<dbReference type="SMART" id="SM01109">
    <property type="entry name" value="CUT"/>
    <property type="match status" value="3"/>
</dbReference>
<dbReference type="SMART" id="SM00389">
    <property type="entry name" value="HOX"/>
    <property type="match status" value="1"/>
</dbReference>
<dbReference type="SUPFAM" id="SSF46689">
    <property type="entry name" value="Homeodomain-like"/>
    <property type="match status" value="1"/>
</dbReference>
<dbReference type="SUPFAM" id="SSF47413">
    <property type="entry name" value="lambda repressor-like DNA-binding domains"/>
    <property type="match status" value="3"/>
</dbReference>
<dbReference type="PROSITE" id="PS51042">
    <property type="entry name" value="CUT"/>
    <property type="match status" value="3"/>
</dbReference>
<dbReference type="PROSITE" id="PS00027">
    <property type="entry name" value="HOMEOBOX_1"/>
    <property type="match status" value="1"/>
</dbReference>
<dbReference type="PROSITE" id="PS50071">
    <property type="entry name" value="HOMEOBOX_2"/>
    <property type="match status" value="1"/>
</dbReference>